<organismHost>
    <name type="scientific">Acanthamoeba polyphaga</name>
    <name type="common">Amoeba</name>
    <dbReference type="NCBI Taxonomy" id="5757"/>
</organismHost>
<comment type="function">
    <text>May catalyze site-specific integration of viral genome into host or helper virus DNA.</text>
</comment>
<comment type="similarity">
    <text evidence="2">Belongs to the 'phage' integrase family.</text>
</comment>
<sequence length="226" mass="26136">MPKYTDDDIFDDGAPQVAKGFDRGIDYLDIAAKLKKGLKKNYKVLQDTESTANAKRFAGSRVIYIIIALLQLKNCSRISEAIVATKKFSVSKNLNERVVVKIAKSEKDLIDRKTKDKIHTKPRYRDMVFPVDLVDTKIFKYIVKTKYWTKFCEFDSPRKRVLDFLLGHYECNTHSLRYAGINYLLNVEKRDMNVVAKFVGHANVNQLVLYTQTKALDEIFDRKIVV</sequence>
<protein>
    <recommendedName>
        <fullName>Putative integrase V10</fullName>
    </recommendedName>
</protein>
<reference key="1">
    <citation type="journal article" date="2008" name="Nature">
        <title>The virophage as a unique parasite of the giant mimivirus.</title>
        <authorList>
            <person name="La Scola B."/>
            <person name="Desnues C."/>
            <person name="Pagnier I."/>
            <person name="Robert C."/>
            <person name="Barrassi L."/>
            <person name="Fournous G."/>
            <person name="Merchat M."/>
            <person name="Suzan-Monti M."/>
            <person name="Forterre P."/>
            <person name="Koonin E."/>
            <person name="Raoult D."/>
        </authorList>
    </citation>
    <scope>NUCLEOTIDE SEQUENCE [GENOMIC DNA]</scope>
</reference>
<accession>B4YNF0</accession>
<dbReference type="EMBL" id="EU606015">
    <property type="protein sequence ID" value="ACF16994.1"/>
    <property type="molecule type" value="Genomic_DNA"/>
</dbReference>
<dbReference type="RefSeq" id="YP_002122371.1">
    <property type="nucleotide sequence ID" value="NC_011132.1"/>
</dbReference>
<dbReference type="SMR" id="B4YNF0"/>
<dbReference type="GeneID" id="6760345"/>
<dbReference type="KEGG" id="vg:6760345"/>
<dbReference type="OrthoDB" id="9510at10239"/>
<dbReference type="Proteomes" id="UP000001863">
    <property type="component" value="Segment"/>
</dbReference>
<dbReference type="GO" id="GO:0003677">
    <property type="term" value="F:DNA binding"/>
    <property type="evidence" value="ECO:0007669"/>
    <property type="project" value="InterPro"/>
</dbReference>
<dbReference type="GO" id="GO:0015074">
    <property type="term" value="P:DNA integration"/>
    <property type="evidence" value="ECO:0007669"/>
    <property type="project" value="UniProtKB-KW"/>
</dbReference>
<dbReference type="GO" id="GO:0075713">
    <property type="term" value="P:establishment of integrated proviral latency"/>
    <property type="evidence" value="ECO:0007669"/>
    <property type="project" value="UniProtKB-KW"/>
</dbReference>
<dbReference type="GO" id="GO:0046718">
    <property type="term" value="P:symbiont entry into host cell"/>
    <property type="evidence" value="ECO:0007669"/>
    <property type="project" value="UniProtKB-KW"/>
</dbReference>
<dbReference type="GO" id="GO:0044826">
    <property type="term" value="P:viral genome integration into host DNA"/>
    <property type="evidence" value="ECO:0007669"/>
    <property type="project" value="UniProtKB-KW"/>
</dbReference>
<dbReference type="InterPro" id="IPR011010">
    <property type="entry name" value="DNA_brk_join_enz"/>
</dbReference>
<dbReference type="SUPFAM" id="SSF56349">
    <property type="entry name" value="DNA breaking-rejoining enzymes"/>
    <property type="match status" value="1"/>
</dbReference>
<feature type="chain" id="PRO_0000369818" description="Putative integrase V10">
    <location>
        <begin position="1"/>
        <end position="226"/>
    </location>
</feature>
<feature type="active site" evidence="1">
    <location>
        <position position="97"/>
    </location>
</feature>
<feature type="active site" evidence="1">
    <location>
        <position position="174"/>
    </location>
</feature>
<feature type="active site" evidence="1">
    <location>
        <position position="177"/>
    </location>
</feature>
<feature type="active site" description="O-(3'-phospho-DNA)-tyrosine intermediate" evidence="1">
    <location>
        <position position="210"/>
    </location>
</feature>
<name>V10_SPTNK</name>
<keyword id="KW-0229">DNA integration</keyword>
<keyword id="KW-1185">Reference proteome</keyword>
<keyword id="KW-1179">Viral genome integration</keyword>
<keyword id="KW-1160">Virus entry into host cell</keyword>
<evidence type="ECO:0000250" key="1"/>
<evidence type="ECO:0000305" key="2"/>
<organism>
    <name type="scientific">Sputnik virophage</name>
    <dbReference type="NCBI Taxonomy" id="543939"/>
    <lineage>
        <taxon>Viruses</taxon>
        <taxon>Varidnaviria</taxon>
        <taxon>Bamfordvirae</taxon>
        <taxon>Preplasmiviricota</taxon>
        <taxon>Maveriviricetes</taxon>
        <taxon>Priklausovirales</taxon>
        <taxon>Lavidaviridae</taxon>
        <taxon>Sputnikvirus</taxon>
        <taxon>Mimivirus-dependent virus Sputnik</taxon>
    </lineage>
</organism>
<proteinExistence type="inferred from homology"/>